<dbReference type="EC" id="2.5.1.3" evidence="1"/>
<dbReference type="EMBL" id="CP001132">
    <property type="protein sequence ID" value="ACH85086.1"/>
    <property type="molecule type" value="Genomic_DNA"/>
</dbReference>
<dbReference type="RefSeq" id="WP_009566482.1">
    <property type="nucleotide sequence ID" value="NC_011206.1"/>
</dbReference>
<dbReference type="SMR" id="B5ERP0"/>
<dbReference type="GeneID" id="65282281"/>
<dbReference type="KEGG" id="afe:Lferr_2902"/>
<dbReference type="eggNOG" id="COG0352">
    <property type="taxonomic scope" value="Bacteria"/>
</dbReference>
<dbReference type="HOGENOM" id="CLU_018272_3_1_6"/>
<dbReference type="UniPathway" id="UPA00060">
    <property type="reaction ID" value="UER00141"/>
</dbReference>
<dbReference type="GO" id="GO:0005737">
    <property type="term" value="C:cytoplasm"/>
    <property type="evidence" value="ECO:0007669"/>
    <property type="project" value="TreeGrafter"/>
</dbReference>
<dbReference type="GO" id="GO:0000287">
    <property type="term" value="F:magnesium ion binding"/>
    <property type="evidence" value="ECO:0007669"/>
    <property type="project" value="UniProtKB-UniRule"/>
</dbReference>
<dbReference type="GO" id="GO:0004789">
    <property type="term" value="F:thiamine-phosphate diphosphorylase activity"/>
    <property type="evidence" value="ECO:0007669"/>
    <property type="project" value="UniProtKB-UniRule"/>
</dbReference>
<dbReference type="GO" id="GO:0009228">
    <property type="term" value="P:thiamine biosynthetic process"/>
    <property type="evidence" value="ECO:0007669"/>
    <property type="project" value="UniProtKB-KW"/>
</dbReference>
<dbReference type="GO" id="GO:0009229">
    <property type="term" value="P:thiamine diphosphate biosynthetic process"/>
    <property type="evidence" value="ECO:0007669"/>
    <property type="project" value="UniProtKB-UniRule"/>
</dbReference>
<dbReference type="CDD" id="cd00564">
    <property type="entry name" value="TMP_TenI"/>
    <property type="match status" value="1"/>
</dbReference>
<dbReference type="Gene3D" id="3.20.20.70">
    <property type="entry name" value="Aldolase class I"/>
    <property type="match status" value="1"/>
</dbReference>
<dbReference type="HAMAP" id="MF_00097">
    <property type="entry name" value="TMP_synthase"/>
    <property type="match status" value="1"/>
</dbReference>
<dbReference type="InterPro" id="IPR013785">
    <property type="entry name" value="Aldolase_TIM"/>
</dbReference>
<dbReference type="InterPro" id="IPR036206">
    <property type="entry name" value="ThiamineP_synth_sf"/>
</dbReference>
<dbReference type="InterPro" id="IPR022998">
    <property type="entry name" value="ThiamineP_synth_TenI"/>
</dbReference>
<dbReference type="InterPro" id="IPR034291">
    <property type="entry name" value="TMP_synthase"/>
</dbReference>
<dbReference type="NCBIfam" id="TIGR00693">
    <property type="entry name" value="thiE"/>
    <property type="match status" value="1"/>
</dbReference>
<dbReference type="PANTHER" id="PTHR20857">
    <property type="entry name" value="THIAMINE-PHOSPHATE PYROPHOSPHORYLASE"/>
    <property type="match status" value="1"/>
</dbReference>
<dbReference type="PANTHER" id="PTHR20857:SF15">
    <property type="entry name" value="THIAMINE-PHOSPHATE SYNTHASE"/>
    <property type="match status" value="1"/>
</dbReference>
<dbReference type="Pfam" id="PF02581">
    <property type="entry name" value="TMP-TENI"/>
    <property type="match status" value="1"/>
</dbReference>
<dbReference type="SUPFAM" id="SSF51391">
    <property type="entry name" value="Thiamin phosphate synthase"/>
    <property type="match status" value="1"/>
</dbReference>
<evidence type="ECO:0000255" key="1">
    <source>
        <dbReference type="HAMAP-Rule" id="MF_00097"/>
    </source>
</evidence>
<feature type="chain" id="PRO_1000093658" description="Thiamine-phosphate synthase">
    <location>
        <begin position="1"/>
        <end position="217"/>
    </location>
</feature>
<feature type="binding site" evidence="1">
    <location>
        <begin position="41"/>
        <end position="45"/>
    </location>
    <ligand>
        <name>4-amino-2-methyl-5-(diphosphooxymethyl)pyrimidine</name>
        <dbReference type="ChEBI" id="CHEBI:57841"/>
    </ligand>
</feature>
<feature type="binding site" evidence="1">
    <location>
        <position position="76"/>
    </location>
    <ligand>
        <name>4-amino-2-methyl-5-(diphosphooxymethyl)pyrimidine</name>
        <dbReference type="ChEBI" id="CHEBI:57841"/>
    </ligand>
</feature>
<feature type="binding site" evidence="1">
    <location>
        <position position="77"/>
    </location>
    <ligand>
        <name>Mg(2+)</name>
        <dbReference type="ChEBI" id="CHEBI:18420"/>
    </ligand>
</feature>
<feature type="binding site" evidence="1">
    <location>
        <position position="96"/>
    </location>
    <ligand>
        <name>Mg(2+)</name>
        <dbReference type="ChEBI" id="CHEBI:18420"/>
    </ligand>
</feature>
<feature type="binding site" evidence="1">
    <location>
        <position position="115"/>
    </location>
    <ligand>
        <name>4-amino-2-methyl-5-(diphosphooxymethyl)pyrimidine</name>
        <dbReference type="ChEBI" id="CHEBI:57841"/>
    </ligand>
</feature>
<feature type="binding site" evidence="1">
    <location>
        <begin position="142"/>
        <end position="144"/>
    </location>
    <ligand>
        <name>2-[(2R,5Z)-2-carboxy-4-methylthiazol-5(2H)-ylidene]ethyl phosphate</name>
        <dbReference type="ChEBI" id="CHEBI:62899"/>
    </ligand>
</feature>
<feature type="binding site" evidence="1">
    <location>
        <position position="145"/>
    </location>
    <ligand>
        <name>4-amino-2-methyl-5-(diphosphooxymethyl)pyrimidine</name>
        <dbReference type="ChEBI" id="CHEBI:57841"/>
    </ligand>
</feature>
<feature type="binding site" evidence="1">
    <location>
        <position position="172"/>
    </location>
    <ligand>
        <name>2-[(2R,5Z)-2-carboxy-4-methylthiazol-5(2H)-ylidene]ethyl phosphate</name>
        <dbReference type="ChEBI" id="CHEBI:62899"/>
    </ligand>
</feature>
<feature type="binding site" evidence="1">
    <location>
        <begin position="192"/>
        <end position="193"/>
    </location>
    <ligand>
        <name>2-[(2R,5Z)-2-carboxy-4-methylthiazol-5(2H)-ylidene]ethyl phosphate</name>
        <dbReference type="ChEBI" id="CHEBI:62899"/>
    </ligand>
</feature>
<organism>
    <name type="scientific">Acidithiobacillus ferrooxidans (strain ATCC 53993 / BNL-5-31)</name>
    <name type="common">Leptospirillum ferrooxidans (ATCC 53993)</name>
    <dbReference type="NCBI Taxonomy" id="380394"/>
    <lineage>
        <taxon>Bacteria</taxon>
        <taxon>Pseudomonadati</taxon>
        <taxon>Pseudomonadota</taxon>
        <taxon>Acidithiobacillia</taxon>
        <taxon>Acidithiobacillales</taxon>
        <taxon>Acidithiobacillaceae</taxon>
        <taxon>Acidithiobacillus</taxon>
    </lineage>
</organism>
<protein>
    <recommendedName>
        <fullName evidence="1">Thiamine-phosphate synthase</fullName>
        <shortName evidence="1">TP synthase</shortName>
        <shortName evidence="1">TPS</shortName>
        <ecNumber evidence="1">2.5.1.3</ecNumber>
    </recommendedName>
    <alternativeName>
        <fullName evidence="1">Thiamine-phosphate pyrophosphorylase</fullName>
        <shortName evidence="1">TMP pyrophosphorylase</shortName>
        <shortName evidence="1">TMP-PPase</shortName>
    </alternativeName>
</protein>
<sequence length="217" mass="22628">MAGDDHLISGLYAITDAHLMPEPVFLARAEAALRGGARILQYRDKGDVVTDARRRRMQAGALRELCAQYGALFVVNDDPRLARVVGAPALHVGAEDAPPAALRAQFGRAILIGVSCYGSVPQAQEAATQGADYVAFGSFFASPSKPQAPVVSVDVLTAARAMIDLPIVAIGGITEANGRALIAAGADALAVISGVFAAEDVEGAARRFTALFNNRKE</sequence>
<comment type="function">
    <text evidence="1">Condenses 4-methyl-5-(beta-hydroxyethyl)thiazole monophosphate (THZ-P) and 2-methyl-4-amino-5-hydroxymethyl pyrimidine pyrophosphate (HMP-PP) to form thiamine monophosphate (TMP).</text>
</comment>
<comment type="catalytic activity">
    <reaction evidence="1">
        <text>2-[(2R,5Z)-2-carboxy-4-methylthiazol-5(2H)-ylidene]ethyl phosphate + 4-amino-2-methyl-5-(diphosphooxymethyl)pyrimidine + 2 H(+) = thiamine phosphate + CO2 + diphosphate</text>
        <dbReference type="Rhea" id="RHEA:47844"/>
        <dbReference type="ChEBI" id="CHEBI:15378"/>
        <dbReference type="ChEBI" id="CHEBI:16526"/>
        <dbReference type="ChEBI" id="CHEBI:33019"/>
        <dbReference type="ChEBI" id="CHEBI:37575"/>
        <dbReference type="ChEBI" id="CHEBI:57841"/>
        <dbReference type="ChEBI" id="CHEBI:62899"/>
        <dbReference type="EC" id="2.5.1.3"/>
    </reaction>
</comment>
<comment type="catalytic activity">
    <reaction evidence="1">
        <text>2-(2-carboxy-4-methylthiazol-5-yl)ethyl phosphate + 4-amino-2-methyl-5-(diphosphooxymethyl)pyrimidine + 2 H(+) = thiamine phosphate + CO2 + diphosphate</text>
        <dbReference type="Rhea" id="RHEA:47848"/>
        <dbReference type="ChEBI" id="CHEBI:15378"/>
        <dbReference type="ChEBI" id="CHEBI:16526"/>
        <dbReference type="ChEBI" id="CHEBI:33019"/>
        <dbReference type="ChEBI" id="CHEBI:37575"/>
        <dbReference type="ChEBI" id="CHEBI:57841"/>
        <dbReference type="ChEBI" id="CHEBI:62890"/>
        <dbReference type="EC" id="2.5.1.3"/>
    </reaction>
</comment>
<comment type="catalytic activity">
    <reaction evidence="1">
        <text>4-methyl-5-(2-phosphooxyethyl)-thiazole + 4-amino-2-methyl-5-(diphosphooxymethyl)pyrimidine + H(+) = thiamine phosphate + diphosphate</text>
        <dbReference type="Rhea" id="RHEA:22328"/>
        <dbReference type="ChEBI" id="CHEBI:15378"/>
        <dbReference type="ChEBI" id="CHEBI:33019"/>
        <dbReference type="ChEBI" id="CHEBI:37575"/>
        <dbReference type="ChEBI" id="CHEBI:57841"/>
        <dbReference type="ChEBI" id="CHEBI:58296"/>
        <dbReference type="EC" id="2.5.1.3"/>
    </reaction>
</comment>
<comment type="cofactor">
    <cofactor evidence="1">
        <name>Mg(2+)</name>
        <dbReference type="ChEBI" id="CHEBI:18420"/>
    </cofactor>
    <text evidence="1">Binds 1 Mg(2+) ion per subunit.</text>
</comment>
<comment type="pathway">
    <text evidence="1">Cofactor biosynthesis; thiamine diphosphate biosynthesis; thiamine phosphate from 4-amino-2-methyl-5-diphosphomethylpyrimidine and 4-methyl-5-(2-phosphoethyl)-thiazole: step 1/1.</text>
</comment>
<comment type="similarity">
    <text evidence="1">Belongs to the thiamine-phosphate synthase family.</text>
</comment>
<name>THIE_ACIF5</name>
<reference key="1">
    <citation type="submission" date="2008-08" db="EMBL/GenBank/DDBJ databases">
        <title>Complete sequence of Acidithiobacillus ferrooxidans ATCC 53993.</title>
        <authorList>
            <person name="Lucas S."/>
            <person name="Copeland A."/>
            <person name="Lapidus A."/>
            <person name="Glavina del Rio T."/>
            <person name="Dalin E."/>
            <person name="Tice H."/>
            <person name="Bruce D."/>
            <person name="Goodwin L."/>
            <person name="Pitluck S."/>
            <person name="Sims D."/>
            <person name="Brettin T."/>
            <person name="Detter J.C."/>
            <person name="Han C."/>
            <person name="Kuske C.R."/>
            <person name="Larimer F."/>
            <person name="Land M."/>
            <person name="Hauser L."/>
            <person name="Kyrpides N."/>
            <person name="Lykidis A."/>
            <person name="Borole A.P."/>
        </authorList>
    </citation>
    <scope>NUCLEOTIDE SEQUENCE [LARGE SCALE GENOMIC DNA]</scope>
    <source>
        <strain>ATCC 53993 / BNL-5-31</strain>
    </source>
</reference>
<keyword id="KW-0460">Magnesium</keyword>
<keyword id="KW-0479">Metal-binding</keyword>
<keyword id="KW-0784">Thiamine biosynthesis</keyword>
<keyword id="KW-0808">Transferase</keyword>
<proteinExistence type="inferred from homology"/>
<gene>
    <name evidence="1" type="primary">thiE</name>
    <name type="ordered locus">Lferr_2902</name>
</gene>
<accession>B5ERP0</accession>